<comment type="function">
    <text evidence="2">Probable ubiquitin-protein ligase involved in the degradation-related ubiquitination of histones. Contributes to the post-translational regulation of histone protein levels by polyubiquitination of excess histones for subsequent degradation.</text>
</comment>
<comment type="catalytic activity">
    <reaction evidence="1">
        <text>[E2 ubiquitin-conjugating enzyme]-S-ubiquitinyl-L-cysteine + [acceptor protein]-L-lysine = [E2 ubiquitin-conjugating enzyme]-L-cysteine + [acceptor protein]-N(6)-ubiquitinyl-L-lysine.</text>
        <dbReference type="EC" id="2.3.2.31"/>
    </reaction>
</comment>
<comment type="pathway">
    <text evidence="7">Protein modification; protein ubiquitination.</text>
</comment>
<comment type="subcellular location">
    <subcellularLocation>
        <location evidence="4">Cytoplasm</location>
    </subcellularLocation>
    <subcellularLocation>
        <location evidence="4">Nucleus</location>
    </subcellularLocation>
    <text evidence="5">Localizes to DNA double-strand breaks (DSBs).</text>
</comment>
<comment type="domain">
    <text evidence="1">Members of the RBR family are atypical E3 ligases. They interact with the E2 conjugating enzyme UBE2L3 and function like HECT-type E3 enzymes: they bind E2s via the first RING domain, but require an obligate trans-thiolation step during the ubiquitin transfer, requiring a conserved cysteine residue in the second RING domain.</text>
</comment>
<comment type="similarity">
    <text evidence="7">Belongs to the RBR family.</text>
</comment>
<sequence>MSDLLDDEFYEEEFENDLLDASEFEDEFDEDAEIDDDGFTVERKRRRAHSVSYRVVSVRDLRASLNEKINQLTSIIDLTREQVLGLYRYFKWNRERLLERYIDAPEESLQKAGVGLSGSKQREVVHHEGTCEICYDEGCLPFFSAECDHEFCLACYRQYLDSRISEGESVIQCPEESCTQIVSIQSITKVLDEKSLDRYHRLLDRSFVDDNDHLRWCPAPDCEFAIECHVTQASLSSVVPTVTCNCGKQFCFGCGHDNHQPTICPLVKIWLQKCQDDSETANWIHANTKECPKCSTTIEKNGGCNHMTCKKCKYEFCWVCLGPWTEHGNNWYTCNRYEEKSSTSARDSQSKSRASLERYLHYYNRFANHEQSAKLDHELYEHTHKRMTQMQVDSNLSWVEVQFLKNAVDILFQCRQTLKWTYAFAYYLARNNQTEIFEDNQRDLELAVENLSELCERPCQDCSLSVFKQRVLDKTVYVRSRRDVLLDDTARGLAEGRWEYVVDV</sequence>
<protein>
    <recommendedName>
        <fullName evidence="2 7">E3 ubiquitin-protein ligase dbl4</fullName>
        <ecNumber evidence="1">2.3.2.31</ecNumber>
    </recommendedName>
    <alternativeName>
        <fullName evidence="6">DNA-break-localizing protein 4</fullName>
    </alternativeName>
    <alternativeName>
        <fullName evidence="2">Histone E3 ligase 1</fullName>
    </alternativeName>
    <alternativeName>
        <fullName evidence="7">RING-type E3 ubiquitin transferase dbl4</fullName>
    </alternativeName>
</protein>
<feature type="chain" id="PRO_0000310488" description="E3 ubiquitin-protein ligase dbl4">
    <location>
        <begin position="1"/>
        <end position="504"/>
    </location>
</feature>
<feature type="zinc finger region" description="RING-type 1" evidence="3">
    <location>
        <begin position="131"/>
        <end position="178"/>
    </location>
</feature>
<feature type="zinc finger region" description="IBR-type" evidence="3">
    <location>
        <begin position="197"/>
        <end position="264"/>
    </location>
</feature>
<feature type="zinc finger region" description="RING-type 2; atypical" evidence="3">
    <location>
        <begin position="291"/>
        <end position="320"/>
    </location>
</feature>
<feature type="region of interest" description="TRIAD supradomain" evidence="3">
    <location>
        <begin position="127"/>
        <end position="338"/>
    </location>
</feature>
<feature type="active site" evidence="3">
    <location>
        <position position="304"/>
    </location>
</feature>
<feature type="binding site" evidence="3">
    <location>
        <position position="131"/>
    </location>
    <ligand>
        <name>Zn(2+)</name>
        <dbReference type="ChEBI" id="CHEBI:29105"/>
        <label>1</label>
    </ligand>
</feature>
<feature type="binding site" evidence="3">
    <location>
        <position position="134"/>
    </location>
    <ligand>
        <name>Zn(2+)</name>
        <dbReference type="ChEBI" id="CHEBI:29105"/>
        <label>1</label>
    </ligand>
</feature>
<feature type="binding site" evidence="3">
    <location>
        <position position="147"/>
    </location>
    <ligand>
        <name>Zn(2+)</name>
        <dbReference type="ChEBI" id="CHEBI:29105"/>
        <label>2</label>
    </ligand>
</feature>
<feature type="binding site" evidence="3">
    <location>
        <position position="149"/>
    </location>
    <ligand>
        <name>Zn(2+)</name>
        <dbReference type="ChEBI" id="CHEBI:29105"/>
        <label>2</label>
    </ligand>
</feature>
<feature type="binding site" evidence="3">
    <location>
        <position position="152"/>
    </location>
    <ligand>
        <name>Zn(2+)</name>
        <dbReference type="ChEBI" id="CHEBI:29105"/>
        <label>1</label>
    </ligand>
</feature>
<feature type="binding site" evidence="3">
    <location>
        <position position="155"/>
    </location>
    <ligand>
        <name>Zn(2+)</name>
        <dbReference type="ChEBI" id="CHEBI:29105"/>
        <label>1</label>
    </ligand>
</feature>
<feature type="binding site" evidence="3">
    <location>
        <position position="173"/>
    </location>
    <ligand>
        <name>Zn(2+)</name>
        <dbReference type="ChEBI" id="CHEBI:29105"/>
        <label>2</label>
    </ligand>
</feature>
<feature type="binding site" evidence="3">
    <location>
        <position position="178"/>
    </location>
    <ligand>
        <name>Zn(2+)</name>
        <dbReference type="ChEBI" id="CHEBI:29105"/>
        <label>2</label>
    </ligand>
</feature>
<feature type="binding site" evidence="3">
    <location>
        <position position="217"/>
    </location>
    <ligand>
        <name>Zn(2+)</name>
        <dbReference type="ChEBI" id="CHEBI:29105"/>
        <label>3</label>
    </ligand>
</feature>
<feature type="binding site" evidence="3">
    <location>
        <position position="222"/>
    </location>
    <ligand>
        <name>Zn(2+)</name>
        <dbReference type="ChEBI" id="CHEBI:29105"/>
        <label>3</label>
    </ligand>
</feature>
<feature type="binding site" evidence="3">
    <location>
        <position position="244"/>
    </location>
    <ligand>
        <name>Zn(2+)</name>
        <dbReference type="ChEBI" id="CHEBI:29105"/>
        <label>3</label>
    </ligand>
</feature>
<feature type="binding site" evidence="3">
    <location>
        <position position="246"/>
    </location>
    <ligand>
        <name>Zn(2+)</name>
        <dbReference type="ChEBI" id="CHEBI:29105"/>
        <label>3</label>
    </ligand>
</feature>
<feature type="binding site" evidence="3">
    <location>
        <position position="251"/>
    </location>
    <ligand>
        <name>Zn(2+)</name>
        <dbReference type="ChEBI" id="CHEBI:29105"/>
        <label>4</label>
    </ligand>
</feature>
<feature type="binding site" evidence="3">
    <location>
        <position position="254"/>
    </location>
    <ligand>
        <name>Zn(2+)</name>
        <dbReference type="ChEBI" id="CHEBI:29105"/>
        <label>4</label>
    </ligand>
</feature>
<feature type="binding site" evidence="3">
    <location>
        <position position="259"/>
    </location>
    <ligand>
        <name>Zn(2+)</name>
        <dbReference type="ChEBI" id="CHEBI:29105"/>
        <label>4</label>
    </ligand>
</feature>
<feature type="binding site" evidence="3">
    <location>
        <position position="264"/>
    </location>
    <ligand>
        <name>Zn(2+)</name>
        <dbReference type="ChEBI" id="CHEBI:29105"/>
        <label>4</label>
    </ligand>
</feature>
<feature type="binding site" evidence="3">
    <location>
        <position position="291"/>
    </location>
    <ligand>
        <name>Zn(2+)</name>
        <dbReference type="ChEBI" id="CHEBI:29105"/>
        <label>5</label>
    </ligand>
</feature>
<feature type="binding site" evidence="3">
    <location>
        <position position="294"/>
    </location>
    <ligand>
        <name>Zn(2+)</name>
        <dbReference type="ChEBI" id="CHEBI:29105"/>
        <label>5</label>
    </ligand>
</feature>
<feature type="binding site" evidence="3">
    <location>
        <position position="309"/>
    </location>
    <ligand>
        <name>Zn(2+)</name>
        <dbReference type="ChEBI" id="CHEBI:29105"/>
        <label>5</label>
    </ligand>
</feature>
<feature type="binding site" evidence="3">
    <location>
        <position position="312"/>
    </location>
    <ligand>
        <name>Zn(2+)</name>
        <dbReference type="ChEBI" id="CHEBI:29105"/>
        <label>5</label>
    </ligand>
</feature>
<feature type="binding site" evidence="3">
    <location>
        <position position="317"/>
    </location>
    <ligand>
        <name>Zn(2+)</name>
        <dbReference type="ChEBI" id="CHEBI:29105"/>
        <label>6</label>
    </ligand>
</feature>
<feature type="binding site" evidence="3">
    <location>
        <position position="320"/>
    </location>
    <ligand>
        <name>Zn(2+)</name>
        <dbReference type="ChEBI" id="CHEBI:29105"/>
        <label>6</label>
    </ligand>
</feature>
<feature type="binding site" evidence="3">
    <location>
        <position position="327"/>
    </location>
    <ligand>
        <name>Zn(2+)</name>
        <dbReference type="ChEBI" id="CHEBI:29105"/>
        <label>6</label>
    </ligand>
</feature>
<feature type="binding site" evidence="3">
    <location>
        <position position="334"/>
    </location>
    <ligand>
        <name>Zn(2+)</name>
        <dbReference type="ChEBI" id="CHEBI:29105"/>
        <label>6</label>
    </ligand>
</feature>
<keyword id="KW-0963">Cytoplasm</keyword>
<keyword id="KW-0479">Metal-binding</keyword>
<keyword id="KW-0539">Nucleus</keyword>
<keyword id="KW-1185">Reference proteome</keyword>
<keyword id="KW-0677">Repeat</keyword>
<keyword id="KW-0808">Transferase</keyword>
<keyword id="KW-0833">Ubl conjugation pathway</keyword>
<keyword id="KW-0862">Zinc</keyword>
<keyword id="KW-0863">Zinc-finger</keyword>
<dbReference type="EC" id="2.3.2.31" evidence="1"/>
<dbReference type="EMBL" id="CU329670">
    <property type="protein sequence ID" value="CAB95997.1"/>
    <property type="molecule type" value="Genomic_DNA"/>
</dbReference>
<dbReference type="RefSeq" id="NP_594204.1">
    <property type="nucleotide sequence ID" value="NM_001019627.2"/>
</dbReference>
<dbReference type="SMR" id="Q9P3U4"/>
<dbReference type="BioGRID" id="279580">
    <property type="interactions" value="1"/>
</dbReference>
<dbReference type="FunCoup" id="Q9P3U4">
    <property type="interactions" value="544"/>
</dbReference>
<dbReference type="STRING" id="284812.Q9P3U4"/>
<dbReference type="iPTMnet" id="Q9P3U4"/>
<dbReference type="PaxDb" id="4896-SPAC328.02.1"/>
<dbReference type="EnsemblFungi" id="SPAC328.02.1">
    <property type="protein sequence ID" value="SPAC328.02.1:pep"/>
    <property type="gene ID" value="SPAC328.02"/>
</dbReference>
<dbReference type="GeneID" id="2543148"/>
<dbReference type="KEGG" id="spo:2543148"/>
<dbReference type="PomBase" id="SPAC328.02">
    <property type="gene designation" value="dbl4"/>
</dbReference>
<dbReference type="VEuPathDB" id="FungiDB:SPAC328.02"/>
<dbReference type="eggNOG" id="KOG1815">
    <property type="taxonomic scope" value="Eukaryota"/>
</dbReference>
<dbReference type="HOGENOM" id="CLU_009823_4_1_1"/>
<dbReference type="InParanoid" id="Q9P3U4"/>
<dbReference type="OMA" id="HRFCMIC"/>
<dbReference type="PhylomeDB" id="Q9P3U4"/>
<dbReference type="Reactome" id="R-SPO-5205685">
    <property type="pathway name" value="PINK1-PRKN Mediated Mitophagy"/>
</dbReference>
<dbReference type="Reactome" id="R-SPO-5689877">
    <property type="pathway name" value="Josephin domain DUBs"/>
</dbReference>
<dbReference type="Reactome" id="R-SPO-9646399">
    <property type="pathway name" value="Aggrephagy"/>
</dbReference>
<dbReference type="Reactome" id="R-SPO-983168">
    <property type="pathway name" value="Antigen processing: Ubiquitination &amp; Proteasome degradation"/>
</dbReference>
<dbReference type="UniPathway" id="UPA00143"/>
<dbReference type="PRO" id="PR:Q9P3U4"/>
<dbReference type="Proteomes" id="UP000002485">
    <property type="component" value="Chromosome I"/>
</dbReference>
<dbReference type="GO" id="GO:0005737">
    <property type="term" value="C:cytoplasm"/>
    <property type="evidence" value="ECO:0000318"/>
    <property type="project" value="GO_Central"/>
</dbReference>
<dbReference type="GO" id="GO:0005829">
    <property type="term" value="C:cytosol"/>
    <property type="evidence" value="ECO:0007005"/>
    <property type="project" value="PomBase"/>
</dbReference>
<dbReference type="GO" id="GO:0005634">
    <property type="term" value="C:nucleus"/>
    <property type="evidence" value="ECO:0007005"/>
    <property type="project" value="PomBase"/>
</dbReference>
<dbReference type="GO" id="GO:0035861">
    <property type="term" value="C:site of double-strand break"/>
    <property type="evidence" value="ECO:0000314"/>
    <property type="project" value="PomBase"/>
</dbReference>
<dbReference type="GO" id="GO:0000151">
    <property type="term" value="C:ubiquitin ligase complex"/>
    <property type="evidence" value="ECO:0000318"/>
    <property type="project" value="GO_Central"/>
</dbReference>
<dbReference type="GO" id="GO:0031624">
    <property type="term" value="F:ubiquitin conjugating enzyme binding"/>
    <property type="evidence" value="ECO:0000318"/>
    <property type="project" value="GO_Central"/>
</dbReference>
<dbReference type="GO" id="GO:0061630">
    <property type="term" value="F:ubiquitin protein ligase activity"/>
    <property type="evidence" value="ECO:0000318"/>
    <property type="project" value="GO_Central"/>
</dbReference>
<dbReference type="GO" id="GO:0008270">
    <property type="term" value="F:zinc ion binding"/>
    <property type="evidence" value="ECO:0000255"/>
    <property type="project" value="PomBase"/>
</dbReference>
<dbReference type="GO" id="GO:0016567">
    <property type="term" value="P:protein ubiquitination"/>
    <property type="evidence" value="ECO:0007669"/>
    <property type="project" value="UniProtKB-UniPathway"/>
</dbReference>
<dbReference type="GO" id="GO:0006511">
    <property type="term" value="P:ubiquitin-dependent protein catabolic process"/>
    <property type="evidence" value="ECO:0000318"/>
    <property type="project" value="GO_Central"/>
</dbReference>
<dbReference type="CDD" id="cd20346">
    <property type="entry name" value="BRcat_RBR_ANKIB1"/>
    <property type="match status" value="1"/>
</dbReference>
<dbReference type="CDD" id="cd20356">
    <property type="entry name" value="Rcat_RBR_HHARI-like"/>
    <property type="match status" value="1"/>
</dbReference>
<dbReference type="CDD" id="cd16625">
    <property type="entry name" value="RING-HC_RBR_HEL2-like"/>
    <property type="match status" value="1"/>
</dbReference>
<dbReference type="FunFam" id="1.20.120.1750:FF:000007">
    <property type="entry name" value="RBR-type E3 ubiquitin transferase"/>
    <property type="match status" value="1"/>
</dbReference>
<dbReference type="FunFam" id="3.30.40.10:FF:000424">
    <property type="entry name" value="RBR-type E3 ubiquitin transferase"/>
    <property type="match status" value="1"/>
</dbReference>
<dbReference type="Gene3D" id="1.20.120.1750">
    <property type="match status" value="1"/>
</dbReference>
<dbReference type="Gene3D" id="3.30.40.10">
    <property type="entry name" value="Zinc/RING finger domain, C3HC4 (zinc finger)"/>
    <property type="match status" value="1"/>
</dbReference>
<dbReference type="InterPro" id="IPR045840">
    <property type="entry name" value="Ariadne"/>
</dbReference>
<dbReference type="InterPro" id="IPR048962">
    <property type="entry name" value="ARIH1-like_UBL"/>
</dbReference>
<dbReference type="InterPro" id="IPR031127">
    <property type="entry name" value="E3_UB_ligase_RBR"/>
</dbReference>
<dbReference type="InterPro" id="IPR002867">
    <property type="entry name" value="IBR_dom"/>
</dbReference>
<dbReference type="InterPro" id="IPR044066">
    <property type="entry name" value="TRIAD_supradom"/>
</dbReference>
<dbReference type="InterPro" id="IPR018957">
    <property type="entry name" value="Znf_C3HC4_RING-type"/>
</dbReference>
<dbReference type="InterPro" id="IPR001841">
    <property type="entry name" value="Znf_RING"/>
</dbReference>
<dbReference type="InterPro" id="IPR013083">
    <property type="entry name" value="Znf_RING/FYVE/PHD"/>
</dbReference>
<dbReference type="InterPro" id="IPR017907">
    <property type="entry name" value="Znf_RING_CS"/>
</dbReference>
<dbReference type="PANTHER" id="PTHR11685">
    <property type="entry name" value="RBR FAMILY RING FINGER AND IBR DOMAIN-CONTAINING"/>
    <property type="match status" value="1"/>
</dbReference>
<dbReference type="Pfam" id="PF19422">
    <property type="entry name" value="Ariadne"/>
    <property type="match status" value="1"/>
</dbReference>
<dbReference type="Pfam" id="PF01485">
    <property type="entry name" value="IBR"/>
    <property type="match status" value="1"/>
</dbReference>
<dbReference type="Pfam" id="PF22191">
    <property type="entry name" value="IBR_1"/>
    <property type="match status" value="1"/>
</dbReference>
<dbReference type="Pfam" id="PF21235">
    <property type="entry name" value="UBA_ARI1"/>
    <property type="match status" value="1"/>
</dbReference>
<dbReference type="Pfam" id="PF00097">
    <property type="entry name" value="zf-C3HC4"/>
    <property type="match status" value="1"/>
</dbReference>
<dbReference type="SMART" id="SM00647">
    <property type="entry name" value="IBR"/>
    <property type="match status" value="2"/>
</dbReference>
<dbReference type="SUPFAM" id="SSF57850">
    <property type="entry name" value="RING/U-box"/>
    <property type="match status" value="3"/>
</dbReference>
<dbReference type="PROSITE" id="PS51873">
    <property type="entry name" value="TRIAD"/>
    <property type="match status" value="1"/>
</dbReference>
<dbReference type="PROSITE" id="PS00518">
    <property type="entry name" value="ZF_RING_1"/>
    <property type="match status" value="1"/>
</dbReference>
<dbReference type="PROSITE" id="PS50089">
    <property type="entry name" value="ZF_RING_2"/>
    <property type="match status" value="1"/>
</dbReference>
<accession>Q9P3U4</accession>
<gene>
    <name evidence="6" type="primary">dbl4</name>
    <name evidence="8" type="ORF">SPAC328.02</name>
</gene>
<proteinExistence type="inferred from homology"/>
<name>HEL1_SCHPO</name>
<evidence type="ECO:0000250" key="1">
    <source>
        <dbReference type="UniProtKB" id="O60260"/>
    </source>
</evidence>
<evidence type="ECO:0000250" key="2">
    <source>
        <dbReference type="UniProtKB" id="P36113"/>
    </source>
</evidence>
<evidence type="ECO:0000255" key="3">
    <source>
        <dbReference type="PROSITE-ProRule" id="PRU01221"/>
    </source>
</evidence>
<evidence type="ECO:0000269" key="4">
    <source>
    </source>
</evidence>
<evidence type="ECO:0000269" key="5">
    <source>
    </source>
</evidence>
<evidence type="ECO:0000303" key="6">
    <source>
    </source>
</evidence>
<evidence type="ECO:0000305" key="7"/>
<evidence type="ECO:0000312" key="8">
    <source>
        <dbReference type="PomBase" id="SPAC328.02"/>
    </source>
</evidence>
<reference key="1">
    <citation type="journal article" date="2002" name="Nature">
        <title>The genome sequence of Schizosaccharomyces pombe.</title>
        <authorList>
            <person name="Wood V."/>
            <person name="Gwilliam R."/>
            <person name="Rajandream M.A."/>
            <person name="Lyne M.H."/>
            <person name="Lyne R."/>
            <person name="Stewart A."/>
            <person name="Sgouros J.G."/>
            <person name="Peat N."/>
            <person name="Hayles J."/>
            <person name="Baker S.G."/>
            <person name="Basham D."/>
            <person name="Bowman S."/>
            <person name="Brooks K."/>
            <person name="Brown D."/>
            <person name="Brown S."/>
            <person name="Chillingworth T."/>
            <person name="Churcher C.M."/>
            <person name="Collins M."/>
            <person name="Connor R."/>
            <person name="Cronin A."/>
            <person name="Davis P."/>
            <person name="Feltwell T."/>
            <person name="Fraser A."/>
            <person name="Gentles S."/>
            <person name="Goble A."/>
            <person name="Hamlin N."/>
            <person name="Harris D.E."/>
            <person name="Hidalgo J."/>
            <person name="Hodgson G."/>
            <person name="Holroyd S."/>
            <person name="Hornsby T."/>
            <person name="Howarth S."/>
            <person name="Huckle E.J."/>
            <person name="Hunt S."/>
            <person name="Jagels K."/>
            <person name="James K.D."/>
            <person name="Jones L."/>
            <person name="Jones M."/>
            <person name="Leather S."/>
            <person name="McDonald S."/>
            <person name="McLean J."/>
            <person name="Mooney P."/>
            <person name="Moule S."/>
            <person name="Mungall K.L."/>
            <person name="Murphy L.D."/>
            <person name="Niblett D."/>
            <person name="Odell C."/>
            <person name="Oliver K."/>
            <person name="O'Neil S."/>
            <person name="Pearson D."/>
            <person name="Quail M.A."/>
            <person name="Rabbinowitsch E."/>
            <person name="Rutherford K.M."/>
            <person name="Rutter S."/>
            <person name="Saunders D."/>
            <person name="Seeger K."/>
            <person name="Sharp S."/>
            <person name="Skelton J."/>
            <person name="Simmonds M.N."/>
            <person name="Squares R."/>
            <person name="Squares S."/>
            <person name="Stevens K."/>
            <person name="Taylor K."/>
            <person name="Taylor R.G."/>
            <person name="Tivey A."/>
            <person name="Walsh S.V."/>
            <person name="Warren T."/>
            <person name="Whitehead S."/>
            <person name="Woodward J.R."/>
            <person name="Volckaert G."/>
            <person name="Aert R."/>
            <person name="Robben J."/>
            <person name="Grymonprez B."/>
            <person name="Weltjens I."/>
            <person name="Vanstreels E."/>
            <person name="Rieger M."/>
            <person name="Schaefer M."/>
            <person name="Mueller-Auer S."/>
            <person name="Gabel C."/>
            <person name="Fuchs M."/>
            <person name="Duesterhoeft A."/>
            <person name="Fritzc C."/>
            <person name="Holzer E."/>
            <person name="Moestl D."/>
            <person name="Hilbert H."/>
            <person name="Borzym K."/>
            <person name="Langer I."/>
            <person name="Beck A."/>
            <person name="Lehrach H."/>
            <person name="Reinhardt R."/>
            <person name="Pohl T.M."/>
            <person name="Eger P."/>
            <person name="Zimmermann W."/>
            <person name="Wedler H."/>
            <person name="Wambutt R."/>
            <person name="Purnelle B."/>
            <person name="Goffeau A."/>
            <person name="Cadieu E."/>
            <person name="Dreano S."/>
            <person name="Gloux S."/>
            <person name="Lelaure V."/>
            <person name="Mottier S."/>
            <person name="Galibert F."/>
            <person name="Aves S.J."/>
            <person name="Xiang Z."/>
            <person name="Hunt C."/>
            <person name="Moore K."/>
            <person name="Hurst S.M."/>
            <person name="Lucas M."/>
            <person name="Rochet M."/>
            <person name="Gaillardin C."/>
            <person name="Tallada V.A."/>
            <person name="Garzon A."/>
            <person name="Thode G."/>
            <person name="Daga R.R."/>
            <person name="Cruzado L."/>
            <person name="Jimenez J."/>
            <person name="Sanchez M."/>
            <person name="del Rey F."/>
            <person name="Benito J."/>
            <person name="Dominguez A."/>
            <person name="Revuelta J.L."/>
            <person name="Moreno S."/>
            <person name="Armstrong J."/>
            <person name="Forsburg S.L."/>
            <person name="Cerutti L."/>
            <person name="Lowe T."/>
            <person name="McCombie W.R."/>
            <person name="Paulsen I."/>
            <person name="Potashkin J."/>
            <person name="Shpakovski G.V."/>
            <person name="Ussery D."/>
            <person name="Barrell B.G."/>
            <person name="Nurse P."/>
        </authorList>
    </citation>
    <scope>NUCLEOTIDE SEQUENCE [LARGE SCALE GENOMIC DNA]</scope>
    <source>
        <strain>972 / ATCC 24843</strain>
    </source>
</reference>
<reference key="2">
    <citation type="journal article" date="2006" name="Nat. Biotechnol.">
        <title>ORFeome cloning and global analysis of protein localization in the fission yeast Schizosaccharomyces pombe.</title>
        <authorList>
            <person name="Matsuyama A."/>
            <person name="Arai R."/>
            <person name="Yashiroda Y."/>
            <person name="Shirai A."/>
            <person name="Kamata A."/>
            <person name="Sekido S."/>
            <person name="Kobayashi Y."/>
            <person name="Hashimoto A."/>
            <person name="Hamamoto M."/>
            <person name="Hiraoka Y."/>
            <person name="Horinouchi S."/>
            <person name="Yoshida M."/>
        </authorList>
    </citation>
    <scope>SUBCELLULAR LOCATION [LARGE SCALE ANALYSIS]</scope>
</reference>
<reference key="3">
    <citation type="journal article" date="2013" name="DNA Repair">
        <title>A proteome-wide visual screen identifies fission yeast proteins localizing to DNA double-strand breaks.</title>
        <authorList>
            <person name="Yu Y."/>
            <person name="Ren J.Y."/>
            <person name="Zhang J.M."/>
            <person name="Suo F."/>
            <person name="Fang X.F."/>
            <person name="Wu F."/>
            <person name="Du L.L."/>
        </authorList>
    </citation>
    <scope>GENE NAME</scope>
    <scope>SUBCELLULAR LOCATION</scope>
</reference>
<organism>
    <name type="scientific">Schizosaccharomyces pombe (strain 972 / ATCC 24843)</name>
    <name type="common">Fission yeast</name>
    <dbReference type="NCBI Taxonomy" id="284812"/>
    <lineage>
        <taxon>Eukaryota</taxon>
        <taxon>Fungi</taxon>
        <taxon>Dikarya</taxon>
        <taxon>Ascomycota</taxon>
        <taxon>Taphrinomycotina</taxon>
        <taxon>Schizosaccharomycetes</taxon>
        <taxon>Schizosaccharomycetales</taxon>
        <taxon>Schizosaccharomycetaceae</taxon>
        <taxon>Schizosaccharomyces</taxon>
    </lineage>
</organism>